<accession>B6YSQ4</accession>
<feature type="chain" id="PRO_1000116105" description="Large ribosomal subunit protein eL18">
    <location>
        <begin position="1"/>
        <end position="120"/>
    </location>
</feature>
<evidence type="ECO:0000255" key="1">
    <source>
        <dbReference type="HAMAP-Rule" id="MF_00329"/>
    </source>
</evidence>
<evidence type="ECO:0000305" key="2"/>
<name>RL18E_THEON</name>
<reference key="1">
    <citation type="journal article" date="2008" name="J. Bacteriol.">
        <title>The complete genome sequence of Thermococcus onnurineus NA1 reveals a mixed heterotrophic and carboxydotrophic metabolism.</title>
        <authorList>
            <person name="Lee H.S."/>
            <person name="Kang S.G."/>
            <person name="Bae S.S."/>
            <person name="Lim J.K."/>
            <person name="Cho Y."/>
            <person name="Kim Y.J."/>
            <person name="Jeon J.H."/>
            <person name="Cha S.-S."/>
            <person name="Kwon K.K."/>
            <person name="Kim H.-T."/>
            <person name="Park C.-J."/>
            <person name="Lee H.-W."/>
            <person name="Kim S.I."/>
            <person name="Chun J."/>
            <person name="Colwell R.R."/>
            <person name="Kim S.-J."/>
            <person name="Lee J.-H."/>
        </authorList>
    </citation>
    <scope>NUCLEOTIDE SEQUENCE [LARGE SCALE GENOMIC DNA]</scope>
    <source>
        <strain>NA1</strain>
    </source>
</reference>
<comment type="similarity">
    <text evidence="1">Belongs to the eukaryotic ribosomal protein eL18 family.</text>
</comment>
<organism>
    <name type="scientific">Thermococcus onnurineus (strain NA1)</name>
    <dbReference type="NCBI Taxonomy" id="523850"/>
    <lineage>
        <taxon>Archaea</taxon>
        <taxon>Methanobacteriati</taxon>
        <taxon>Methanobacteriota</taxon>
        <taxon>Thermococci</taxon>
        <taxon>Thermococcales</taxon>
        <taxon>Thermococcaceae</taxon>
        <taxon>Thermococcus</taxon>
    </lineage>
</organism>
<gene>
    <name evidence="1" type="primary">rpl18e</name>
    <name type="ordered locus">TON_0106</name>
</gene>
<sequence>MKRTGPTDINLRRLIRYLRKKSNEEGVKIWKDIAWRLERPRRQRAEVNVSKINRYTKEGDTVIVPGSVLGAGKLEHKVVVAAWKFSETAKKKITEAGGEAITIEELIERNPKGSGVIIME</sequence>
<protein>
    <recommendedName>
        <fullName evidence="1">Large ribosomal subunit protein eL18</fullName>
    </recommendedName>
    <alternativeName>
        <fullName evidence="2">50S ribosomal protein L18e</fullName>
    </alternativeName>
</protein>
<proteinExistence type="inferred from homology"/>
<dbReference type="EMBL" id="CP000855">
    <property type="protein sequence ID" value="ACJ15591.1"/>
    <property type="molecule type" value="Genomic_DNA"/>
</dbReference>
<dbReference type="RefSeq" id="WP_012571064.1">
    <property type="nucleotide sequence ID" value="NC_011529.1"/>
</dbReference>
<dbReference type="SMR" id="B6YSQ4"/>
<dbReference type="STRING" id="523850.TON_0106"/>
<dbReference type="GeneID" id="7017755"/>
<dbReference type="KEGG" id="ton:TON_0106"/>
<dbReference type="PATRIC" id="fig|523850.10.peg.106"/>
<dbReference type="eggNOG" id="arCOG00780">
    <property type="taxonomic scope" value="Archaea"/>
</dbReference>
<dbReference type="HOGENOM" id="CLU_146465_0_0_2"/>
<dbReference type="OrthoDB" id="11309at2157"/>
<dbReference type="Proteomes" id="UP000002727">
    <property type="component" value="Chromosome"/>
</dbReference>
<dbReference type="GO" id="GO:0022625">
    <property type="term" value="C:cytosolic large ribosomal subunit"/>
    <property type="evidence" value="ECO:0007669"/>
    <property type="project" value="TreeGrafter"/>
</dbReference>
<dbReference type="GO" id="GO:0003723">
    <property type="term" value="F:RNA binding"/>
    <property type="evidence" value="ECO:0007669"/>
    <property type="project" value="TreeGrafter"/>
</dbReference>
<dbReference type="GO" id="GO:0003735">
    <property type="term" value="F:structural constituent of ribosome"/>
    <property type="evidence" value="ECO:0007669"/>
    <property type="project" value="InterPro"/>
</dbReference>
<dbReference type="GO" id="GO:0006412">
    <property type="term" value="P:translation"/>
    <property type="evidence" value="ECO:0007669"/>
    <property type="project" value="UniProtKB-UniRule"/>
</dbReference>
<dbReference type="FunFam" id="3.100.10.10:FF:000013">
    <property type="entry name" value="50S ribosomal protein L18e"/>
    <property type="match status" value="1"/>
</dbReference>
<dbReference type="Gene3D" id="3.100.10.10">
    <property type="match status" value="1"/>
</dbReference>
<dbReference type="HAMAP" id="MF_00329">
    <property type="entry name" value="Ribosomal_eL18"/>
    <property type="match status" value="1"/>
</dbReference>
<dbReference type="InterPro" id="IPR000039">
    <property type="entry name" value="Ribosomal_eL18"/>
</dbReference>
<dbReference type="InterPro" id="IPR021132">
    <property type="entry name" value="Ribosomal_eL18/eL18-A/B/_CS"/>
</dbReference>
<dbReference type="InterPro" id="IPR022947">
    <property type="entry name" value="Ribosomal_eL18_arc"/>
</dbReference>
<dbReference type="InterPro" id="IPR021131">
    <property type="entry name" value="Ribosomal_uL15/eL18"/>
</dbReference>
<dbReference type="InterPro" id="IPR036227">
    <property type="entry name" value="Ribosomal_uL15/eL18_sf"/>
</dbReference>
<dbReference type="NCBIfam" id="NF003079">
    <property type="entry name" value="PRK04005.1"/>
    <property type="match status" value="1"/>
</dbReference>
<dbReference type="PANTHER" id="PTHR10934">
    <property type="entry name" value="60S RIBOSOMAL PROTEIN L18"/>
    <property type="match status" value="1"/>
</dbReference>
<dbReference type="PANTHER" id="PTHR10934:SF2">
    <property type="entry name" value="LARGE RIBOSOMAL SUBUNIT PROTEIN EL18"/>
    <property type="match status" value="1"/>
</dbReference>
<dbReference type="Pfam" id="PF17135">
    <property type="entry name" value="Ribosomal_L18"/>
    <property type="match status" value="1"/>
</dbReference>
<dbReference type="SUPFAM" id="SSF52080">
    <property type="entry name" value="Ribosomal proteins L15p and L18e"/>
    <property type="match status" value="1"/>
</dbReference>
<dbReference type="PROSITE" id="PS01106">
    <property type="entry name" value="RIBOSOMAL_L18E"/>
    <property type="match status" value="1"/>
</dbReference>
<keyword id="KW-0687">Ribonucleoprotein</keyword>
<keyword id="KW-0689">Ribosomal protein</keyword>